<keyword id="KW-0067">ATP-binding</keyword>
<keyword id="KW-0963">Cytoplasm</keyword>
<keyword id="KW-0227">DNA damage</keyword>
<keyword id="KW-0233">DNA recombination</keyword>
<keyword id="KW-0234">DNA repair</keyword>
<keyword id="KW-0238">DNA-binding</keyword>
<keyword id="KW-0547">Nucleotide-binding</keyword>
<keyword id="KW-1185">Reference proteome</keyword>
<keyword id="KW-0742">SOS response</keyword>
<organism>
    <name type="scientific">Rhodospirillum rubrum (strain ATCC 11170 / ATH 1.1.1 / DSM 467 / LMG 4362 / NCIMB 8255 / S1)</name>
    <dbReference type="NCBI Taxonomy" id="269796"/>
    <lineage>
        <taxon>Bacteria</taxon>
        <taxon>Pseudomonadati</taxon>
        <taxon>Pseudomonadota</taxon>
        <taxon>Alphaproteobacteria</taxon>
        <taxon>Rhodospirillales</taxon>
        <taxon>Rhodospirillaceae</taxon>
        <taxon>Rhodospirillum</taxon>
    </lineage>
</organism>
<evidence type="ECO:0000255" key="1">
    <source>
        <dbReference type="HAMAP-Rule" id="MF_00268"/>
    </source>
</evidence>
<evidence type="ECO:0000256" key="2">
    <source>
        <dbReference type="SAM" id="MobiDB-lite"/>
    </source>
</evidence>
<sequence length="366" mass="38825">MSQSVLRLVDKDTMDKQKALEAAVGQIERAFGKGSIMKLGQRGSVVDIESISTGSLGLDIALGIGGLPRGRIVEIYGPESSGKTTLALHVVAEAQKKGGQCAFVDAEHAFDPLYARKLGVSLDDLLVSQPDTGEQALEIADTLVRSGAIDVLVIDSVAALVPKAELEGDMGDSHVGLQARLMSQALRKLTGTVSRSNTLIIFINQIRMKIGVMFGNPETTTGGNALKFYASVRLDIRRIGAVKDKEEVVGNQTRVKVVKNKVAPPFKVVEFDIMYGEGISKLGEMLDLGVKANIIEKSGAWFSYNSTRIGQGRENAKQFLRDNPAMAEEIENAVRANAGLIAEEMIGGPGGEDDDAGGAAGVGDEA</sequence>
<name>RECA_RHORT</name>
<protein>
    <recommendedName>
        <fullName evidence="1">Protein RecA</fullName>
    </recommendedName>
    <alternativeName>
        <fullName evidence="1">Recombinase A</fullName>
    </alternativeName>
</protein>
<accession>Q2RQH9</accession>
<comment type="function">
    <text evidence="1">Can catalyze the hydrolysis of ATP in the presence of single-stranded DNA, the ATP-dependent uptake of single-stranded DNA by duplex DNA, and the ATP-dependent hybridization of homologous single-stranded DNAs. It interacts with LexA causing its activation and leading to its autocatalytic cleavage.</text>
</comment>
<comment type="subcellular location">
    <subcellularLocation>
        <location evidence="1">Cytoplasm</location>
    </subcellularLocation>
</comment>
<comment type="similarity">
    <text evidence="1">Belongs to the RecA family.</text>
</comment>
<proteinExistence type="inferred from homology"/>
<gene>
    <name evidence="1" type="primary">recA</name>
    <name type="ordered locus">Rru_A2819</name>
</gene>
<feature type="chain" id="PRO_1000047980" description="Protein RecA">
    <location>
        <begin position="1"/>
        <end position="366"/>
    </location>
</feature>
<feature type="region of interest" description="Disordered" evidence="2">
    <location>
        <begin position="346"/>
        <end position="366"/>
    </location>
</feature>
<feature type="binding site" evidence="1">
    <location>
        <begin position="77"/>
        <end position="84"/>
    </location>
    <ligand>
        <name>ATP</name>
        <dbReference type="ChEBI" id="CHEBI:30616"/>
    </ligand>
</feature>
<reference key="1">
    <citation type="journal article" date="2011" name="Stand. Genomic Sci.">
        <title>Complete genome sequence of Rhodospirillum rubrum type strain (S1).</title>
        <authorList>
            <person name="Munk A.C."/>
            <person name="Copeland A."/>
            <person name="Lucas S."/>
            <person name="Lapidus A."/>
            <person name="Del Rio T.G."/>
            <person name="Barry K."/>
            <person name="Detter J.C."/>
            <person name="Hammon N."/>
            <person name="Israni S."/>
            <person name="Pitluck S."/>
            <person name="Brettin T."/>
            <person name="Bruce D."/>
            <person name="Han C."/>
            <person name="Tapia R."/>
            <person name="Gilna P."/>
            <person name="Schmutz J."/>
            <person name="Larimer F."/>
            <person name="Land M."/>
            <person name="Kyrpides N.C."/>
            <person name="Mavromatis K."/>
            <person name="Richardson P."/>
            <person name="Rohde M."/>
            <person name="Goeker M."/>
            <person name="Klenk H.P."/>
            <person name="Zhang Y."/>
            <person name="Roberts G.P."/>
            <person name="Reslewic S."/>
            <person name="Schwartz D.C."/>
        </authorList>
    </citation>
    <scope>NUCLEOTIDE SEQUENCE [LARGE SCALE GENOMIC DNA]</scope>
    <source>
        <strain>ATCC 11170 / ATH 1.1.1 / DSM 467 / LMG 4362 / NCIMB 8255 / S1</strain>
    </source>
</reference>
<dbReference type="EMBL" id="CP000230">
    <property type="protein sequence ID" value="ABC23616.1"/>
    <property type="molecule type" value="Genomic_DNA"/>
</dbReference>
<dbReference type="RefSeq" id="WP_011390446.1">
    <property type="nucleotide sequence ID" value="NC_007643.1"/>
</dbReference>
<dbReference type="RefSeq" id="YP_427903.1">
    <property type="nucleotide sequence ID" value="NC_007643.1"/>
</dbReference>
<dbReference type="SMR" id="Q2RQH9"/>
<dbReference type="STRING" id="269796.Rru_A2819"/>
<dbReference type="EnsemblBacteria" id="ABC23616">
    <property type="protein sequence ID" value="ABC23616"/>
    <property type="gene ID" value="Rru_A2819"/>
</dbReference>
<dbReference type="KEGG" id="rru:Rru_A2819"/>
<dbReference type="PATRIC" id="fig|269796.9.peg.2925"/>
<dbReference type="eggNOG" id="COG0468">
    <property type="taxonomic scope" value="Bacteria"/>
</dbReference>
<dbReference type="HOGENOM" id="CLU_040469_3_2_5"/>
<dbReference type="PhylomeDB" id="Q2RQH9"/>
<dbReference type="Proteomes" id="UP000001929">
    <property type="component" value="Chromosome"/>
</dbReference>
<dbReference type="GO" id="GO:0005829">
    <property type="term" value="C:cytosol"/>
    <property type="evidence" value="ECO:0007669"/>
    <property type="project" value="TreeGrafter"/>
</dbReference>
<dbReference type="GO" id="GO:0005524">
    <property type="term" value="F:ATP binding"/>
    <property type="evidence" value="ECO:0007669"/>
    <property type="project" value="UniProtKB-UniRule"/>
</dbReference>
<dbReference type="GO" id="GO:0016887">
    <property type="term" value="F:ATP hydrolysis activity"/>
    <property type="evidence" value="ECO:0007669"/>
    <property type="project" value="InterPro"/>
</dbReference>
<dbReference type="GO" id="GO:0140664">
    <property type="term" value="F:ATP-dependent DNA damage sensor activity"/>
    <property type="evidence" value="ECO:0007669"/>
    <property type="project" value="InterPro"/>
</dbReference>
<dbReference type="GO" id="GO:0003684">
    <property type="term" value="F:damaged DNA binding"/>
    <property type="evidence" value="ECO:0007669"/>
    <property type="project" value="UniProtKB-UniRule"/>
</dbReference>
<dbReference type="GO" id="GO:0003697">
    <property type="term" value="F:single-stranded DNA binding"/>
    <property type="evidence" value="ECO:0007669"/>
    <property type="project" value="UniProtKB-UniRule"/>
</dbReference>
<dbReference type="GO" id="GO:0006310">
    <property type="term" value="P:DNA recombination"/>
    <property type="evidence" value="ECO:0007669"/>
    <property type="project" value="UniProtKB-UniRule"/>
</dbReference>
<dbReference type="GO" id="GO:0006281">
    <property type="term" value="P:DNA repair"/>
    <property type="evidence" value="ECO:0007669"/>
    <property type="project" value="UniProtKB-UniRule"/>
</dbReference>
<dbReference type="GO" id="GO:0009432">
    <property type="term" value="P:SOS response"/>
    <property type="evidence" value="ECO:0007669"/>
    <property type="project" value="UniProtKB-UniRule"/>
</dbReference>
<dbReference type="CDD" id="cd00983">
    <property type="entry name" value="RecA"/>
    <property type="match status" value="1"/>
</dbReference>
<dbReference type="FunFam" id="3.40.50.300:FF:000087">
    <property type="entry name" value="Recombinase RecA"/>
    <property type="match status" value="1"/>
</dbReference>
<dbReference type="Gene3D" id="3.40.50.300">
    <property type="entry name" value="P-loop containing nucleotide triphosphate hydrolases"/>
    <property type="match status" value="1"/>
</dbReference>
<dbReference type="HAMAP" id="MF_00268">
    <property type="entry name" value="RecA"/>
    <property type="match status" value="1"/>
</dbReference>
<dbReference type="InterPro" id="IPR003593">
    <property type="entry name" value="AAA+_ATPase"/>
</dbReference>
<dbReference type="InterPro" id="IPR013765">
    <property type="entry name" value="DNA_recomb/repair_RecA"/>
</dbReference>
<dbReference type="InterPro" id="IPR020584">
    <property type="entry name" value="DNA_recomb/repair_RecA_CS"/>
</dbReference>
<dbReference type="InterPro" id="IPR027417">
    <property type="entry name" value="P-loop_NTPase"/>
</dbReference>
<dbReference type="InterPro" id="IPR049261">
    <property type="entry name" value="RecA-like_C"/>
</dbReference>
<dbReference type="InterPro" id="IPR049428">
    <property type="entry name" value="RecA-like_N"/>
</dbReference>
<dbReference type="InterPro" id="IPR020588">
    <property type="entry name" value="RecA_ATP-bd"/>
</dbReference>
<dbReference type="InterPro" id="IPR023400">
    <property type="entry name" value="RecA_C_sf"/>
</dbReference>
<dbReference type="InterPro" id="IPR020587">
    <property type="entry name" value="RecA_monomer-monomer_interface"/>
</dbReference>
<dbReference type="NCBIfam" id="TIGR02012">
    <property type="entry name" value="tigrfam_recA"/>
    <property type="match status" value="1"/>
</dbReference>
<dbReference type="PANTHER" id="PTHR45900:SF1">
    <property type="entry name" value="MITOCHONDRIAL DNA REPAIR PROTEIN RECA HOMOLOG-RELATED"/>
    <property type="match status" value="1"/>
</dbReference>
<dbReference type="PANTHER" id="PTHR45900">
    <property type="entry name" value="RECA"/>
    <property type="match status" value="1"/>
</dbReference>
<dbReference type="Pfam" id="PF00154">
    <property type="entry name" value="RecA"/>
    <property type="match status" value="1"/>
</dbReference>
<dbReference type="Pfam" id="PF21096">
    <property type="entry name" value="RecA_C"/>
    <property type="match status" value="1"/>
</dbReference>
<dbReference type="PRINTS" id="PR00142">
    <property type="entry name" value="RECA"/>
</dbReference>
<dbReference type="SMART" id="SM00382">
    <property type="entry name" value="AAA"/>
    <property type="match status" value="1"/>
</dbReference>
<dbReference type="SUPFAM" id="SSF52540">
    <property type="entry name" value="P-loop containing nucleoside triphosphate hydrolases"/>
    <property type="match status" value="1"/>
</dbReference>
<dbReference type="SUPFAM" id="SSF54752">
    <property type="entry name" value="RecA protein, C-terminal domain"/>
    <property type="match status" value="1"/>
</dbReference>
<dbReference type="PROSITE" id="PS00321">
    <property type="entry name" value="RECA_1"/>
    <property type="match status" value="1"/>
</dbReference>
<dbReference type="PROSITE" id="PS50162">
    <property type="entry name" value="RECA_2"/>
    <property type="match status" value="1"/>
</dbReference>
<dbReference type="PROSITE" id="PS50163">
    <property type="entry name" value="RECA_3"/>
    <property type="match status" value="1"/>
</dbReference>